<feature type="chain" id="PRO_0000437141" description="Mitochondrial import receptor subunit TOM22 homolog" evidence="4">
    <location>
        <begin position="1"/>
        <end position="109"/>
    </location>
</feature>
<feature type="topological domain" description="Cytoplasmic" evidence="4">
    <location>
        <begin position="1"/>
        <end position="60"/>
    </location>
</feature>
<feature type="transmembrane region" description="Helical" evidence="2">
    <location>
        <begin position="61"/>
        <end position="77"/>
    </location>
</feature>
<feature type="topological domain" description="Mitochondrial intermembrane" evidence="4">
    <location>
        <begin position="78"/>
        <end position="109"/>
    </location>
</feature>
<feature type="splice variant" id="VSP_058486" description="In isoform b." evidence="4">
    <location>
        <begin position="1"/>
        <end position="94"/>
    </location>
</feature>
<organism evidence="5">
    <name type="scientific">Caenorhabditis elegans</name>
    <dbReference type="NCBI Taxonomy" id="6239"/>
    <lineage>
        <taxon>Eukaryota</taxon>
        <taxon>Metazoa</taxon>
        <taxon>Ecdysozoa</taxon>
        <taxon>Nematoda</taxon>
        <taxon>Chromadorea</taxon>
        <taxon>Rhabditida</taxon>
        <taxon>Rhabditina</taxon>
        <taxon>Rhabditomorpha</taxon>
        <taxon>Rhabditoidea</taxon>
        <taxon>Rhabditidae</taxon>
        <taxon>Peloderinae</taxon>
        <taxon>Caenorhabditis</taxon>
    </lineage>
</organism>
<keyword id="KW-0025">Alternative splicing</keyword>
<keyword id="KW-0472">Membrane</keyword>
<keyword id="KW-0496">Mitochondrion</keyword>
<keyword id="KW-1000">Mitochondrion outer membrane</keyword>
<keyword id="KW-0653">Protein transport</keyword>
<keyword id="KW-0675">Receptor</keyword>
<keyword id="KW-1185">Reference proteome</keyword>
<keyword id="KW-0811">Translocation</keyword>
<keyword id="KW-0812">Transmembrane</keyword>
<keyword id="KW-1133">Transmembrane helix</keyword>
<keyword id="KW-0813">Transport</keyword>
<protein>
    <recommendedName>
        <fullName evidence="4">Mitochondrial import receptor subunit TOM22 homolog</fullName>
    </recommendedName>
</protein>
<proteinExistence type="inferred from homology"/>
<gene>
    <name evidence="6" type="primary">tomm-22</name>
    <name evidence="6" type="ORF">W10D9.5</name>
</gene>
<reference evidence="5" key="1">
    <citation type="journal article" date="1998" name="Science">
        <title>Genome sequence of the nematode C. elegans: a platform for investigating biology.</title>
        <authorList>
            <consortium name="The C. elegans sequencing consortium"/>
        </authorList>
    </citation>
    <scope>NUCLEOTIDE SEQUENCE [LARGE SCALE GENOMIC DNA]</scope>
    <source>
        <strain evidence="5">Bristol N2</strain>
    </source>
</reference>
<reference evidence="4" key="2">
    <citation type="journal article" date="2011" name="PLoS ONE">
        <title>Mitochondrial function is required for secretion of DAF-28/insulin in C. elegans.</title>
        <authorList>
            <person name="Billing O."/>
            <person name="Kao G."/>
            <person name="Naredi P."/>
        </authorList>
    </citation>
    <scope>FUNCTION</scope>
    <scope>DISRUPTION PHENOTYPE</scope>
</reference>
<name>TOM22_CAEEL</name>
<dbReference type="EMBL" id="BX284602">
    <property type="protein sequence ID" value="CCD65583.1"/>
    <property type="molecule type" value="Genomic_DNA"/>
</dbReference>
<dbReference type="EMBL" id="BX284602">
    <property type="protein sequence ID" value="CUR29997.1"/>
    <property type="molecule type" value="Genomic_DNA"/>
</dbReference>
<dbReference type="PIR" id="F88021">
    <property type="entry name" value="F88021"/>
</dbReference>
<dbReference type="RefSeq" id="NP_001303802.1">
    <property type="nucleotide sequence ID" value="NM_001316873.1"/>
</dbReference>
<dbReference type="RefSeq" id="NP_001368584.1">
    <molecule id="O17287-2"/>
    <property type="nucleotide sequence ID" value="NM_001381316.1"/>
</dbReference>
<dbReference type="RefSeq" id="NP_493741.1">
    <molecule id="O17287-1"/>
    <property type="nucleotide sequence ID" value="NM_061340.6"/>
</dbReference>
<dbReference type="SMR" id="O17287"/>
<dbReference type="DIP" id="DIP-26909N"/>
<dbReference type="FunCoup" id="O17287">
    <property type="interactions" value="2687"/>
</dbReference>
<dbReference type="STRING" id="6239.W10D9.5a.1"/>
<dbReference type="PaxDb" id="6239-W10D9.5"/>
<dbReference type="PeptideAtlas" id="O17287"/>
<dbReference type="EnsemblMetazoa" id="W10D9.5a.1">
    <molecule id="O17287-1"/>
    <property type="protein sequence ID" value="W10D9.5a.1"/>
    <property type="gene ID" value="WBGene00021133"/>
</dbReference>
<dbReference type="EnsemblMetazoa" id="W10D9.5b.1">
    <molecule id="O17287-2"/>
    <property type="protein sequence ID" value="W10D9.5b.1"/>
    <property type="gene ID" value="WBGene00021133"/>
</dbReference>
<dbReference type="GeneID" id="173436"/>
<dbReference type="KEGG" id="cel:CELE_W10D9.5"/>
<dbReference type="UCSC" id="W10D9.5.2">
    <molecule id="O17287-1"/>
    <property type="organism name" value="c. elegans"/>
</dbReference>
<dbReference type="AGR" id="WB:WBGene00021133"/>
<dbReference type="CTD" id="173436"/>
<dbReference type="WormBase" id="W10D9.5a">
    <molecule id="O17287-1"/>
    <property type="protein sequence ID" value="CE14794"/>
    <property type="gene ID" value="WBGene00021133"/>
    <property type="gene designation" value="tomm-22"/>
</dbReference>
<dbReference type="WormBase" id="W10D9.5b">
    <molecule id="O17287-2"/>
    <property type="protein sequence ID" value="CE51123"/>
    <property type="gene ID" value="WBGene00021133"/>
    <property type="gene designation" value="tomm-22"/>
</dbReference>
<dbReference type="eggNOG" id="KOG4111">
    <property type="taxonomic scope" value="Eukaryota"/>
</dbReference>
<dbReference type="GeneTree" id="ENSGT00390000016475"/>
<dbReference type="HOGENOM" id="CLU_108175_1_1_1"/>
<dbReference type="InParanoid" id="O17287"/>
<dbReference type="OMA" id="FPEKAWS"/>
<dbReference type="OrthoDB" id="10016939at2759"/>
<dbReference type="PhylomeDB" id="O17287"/>
<dbReference type="PRO" id="PR:O17287"/>
<dbReference type="Proteomes" id="UP000001940">
    <property type="component" value="Chromosome II"/>
</dbReference>
<dbReference type="Bgee" id="WBGene00021133">
    <property type="expression patterns" value="Expressed in germ line (C elegans) and 4 other cell types or tissues"/>
</dbReference>
<dbReference type="GO" id="GO:0005741">
    <property type="term" value="C:mitochondrial outer membrane"/>
    <property type="evidence" value="ECO:0007669"/>
    <property type="project" value="UniProtKB-SubCell"/>
</dbReference>
<dbReference type="GO" id="GO:0006886">
    <property type="term" value="P:intracellular protein transport"/>
    <property type="evidence" value="ECO:0007669"/>
    <property type="project" value="InterPro"/>
</dbReference>
<dbReference type="CDD" id="cd22884">
    <property type="entry name" value="TOM22"/>
    <property type="match status" value="1"/>
</dbReference>
<dbReference type="InterPro" id="IPR005683">
    <property type="entry name" value="Tom22"/>
</dbReference>
<dbReference type="PANTHER" id="PTHR12504">
    <property type="entry name" value="MITOCHONDRIAL IMPORT RECEPTOR SUBUNIT TOM22"/>
    <property type="match status" value="1"/>
</dbReference>
<dbReference type="PANTHER" id="PTHR12504:SF0">
    <property type="entry name" value="MITOCHONDRIAL IMPORT RECEPTOR SUBUNIT TOM22 HOMOLOG"/>
    <property type="match status" value="1"/>
</dbReference>
<dbReference type="Pfam" id="PF04281">
    <property type="entry name" value="Tom22"/>
    <property type="match status" value="1"/>
</dbReference>
<sequence>MALVRDDFDDIPDSEIHETIVERIEGLGEMFPDALRSAVHSTVDWSIWGVKGVFSLTKSTIWVVSTTSLIAFLPYIIEKERSDLEKTQVAQQRQMLLGPSAAIQQAKTA</sequence>
<accession>O17287</accession>
<accession>A0A0M7RDR0</accession>
<comment type="function">
    <text evidence="1 3">Central receptor component of the translocase of the outer membrane of mitochondria (TOM complex) responsible for the recognition and translocation of cytosolically synthesized mitochondrial preproteins (By similarity). Together with the peripheral receptor tomm-20 functions as the transit peptide receptor and facilitates the movement of preproteins into the translocation pore (PubMed:21264209).</text>
</comment>
<comment type="subunit">
    <text evidence="1">Forms part of the preprotein translocase complex of the outer mitochondrial membrane (TOM complex).</text>
</comment>
<comment type="subcellular location">
    <subcellularLocation>
        <location evidence="1">Mitochondrion outer membrane</location>
        <topology evidence="1">Single-pass membrane protein</topology>
    </subcellularLocation>
</comment>
<comment type="alternative products">
    <event type="alternative splicing"/>
    <isoform>
        <id>O17287-1</id>
        <name evidence="6">a</name>
        <sequence type="displayed"/>
    </isoform>
    <isoform>
        <id>O17287-2</id>
        <name evidence="7">b</name>
        <sequence type="described" ref="VSP_058486"/>
    </isoform>
</comment>
<comment type="disruption phenotype">
    <text evidence="3">RNAi-mediated knockdown results in impaired mitochondrial homeostasis with the up-regulation of the mitochondrial unfolded protein chaperone hsp-6 and impaired daf-28/insulin secretion.</text>
</comment>
<comment type="similarity">
    <text evidence="4">Belongs to the Tom22 family.</text>
</comment>
<evidence type="ECO:0000250" key="1">
    <source>
        <dbReference type="UniProtKB" id="Q9NS69"/>
    </source>
</evidence>
<evidence type="ECO:0000255" key="2"/>
<evidence type="ECO:0000269" key="3">
    <source>
    </source>
</evidence>
<evidence type="ECO:0000305" key="4"/>
<evidence type="ECO:0000312" key="5">
    <source>
        <dbReference type="Proteomes" id="UP000001940"/>
    </source>
</evidence>
<evidence type="ECO:0000312" key="6">
    <source>
        <dbReference type="WormBase" id="W10D9.5a"/>
    </source>
</evidence>
<evidence type="ECO:0000312" key="7">
    <source>
        <dbReference type="WormBase" id="W10D9.5b"/>
    </source>
</evidence>